<proteinExistence type="evidence at protein level"/>
<reference key="1">
    <citation type="journal article" date="2000" name="Nature">
        <title>Sequence and analysis of chromosome 1 of the plant Arabidopsis thaliana.</title>
        <authorList>
            <person name="Theologis A."/>
            <person name="Ecker J.R."/>
            <person name="Palm C.J."/>
            <person name="Federspiel N.A."/>
            <person name="Kaul S."/>
            <person name="White O."/>
            <person name="Alonso J."/>
            <person name="Altafi H."/>
            <person name="Araujo R."/>
            <person name="Bowman C.L."/>
            <person name="Brooks S.Y."/>
            <person name="Buehler E."/>
            <person name="Chan A."/>
            <person name="Chao Q."/>
            <person name="Chen H."/>
            <person name="Cheuk R.F."/>
            <person name="Chin C.W."/>
            <person name="Chung M.K."/>
            <person name="Conn L."/>
            <person name="Conway A.B."/>
            <person name="Conway A.R."/>
            <person name="Creasy T.H."/>
            <person name="Dewar K."/>
            <person name="Dunn P."/>
            <person name="Etgu P."/>
            <person name="Feldblyum T.V."/>
            <person name="Feng J.-D."/>
            <person name="Fong B."/>
            <person name="Fujii C.Y."/>
            <person name="Gill J.E."/>
            <person name="Goldsmith A.D."/>
            <person name="Haas B."/>
            <person name="Hansen N.F."/>
            <person name="Hughes B."/>
            <person name="Huizar L."/>
            <person name="Hunter J.L."/>
            <person name="Jenkins J."/>
            <person name="Johnson-Hopson C."/>
            <person name="Khan S."/>
            <person name="Khaykin E."/>
            <person name="Kim C.J."/>
            <person name="Koo H.L."/>
            <person name="Kremenetskaia I."/>
            <person name="Kurtz D.B."/>
            <person name="Kwan A."/>
            <person name="Lam B."/>
            <person name="Langin-Hooper S."/>
            <person name="Lee A."/>
            <person name="Lee J.M."/>
            <person name="Lenz C.A."/>
            <person name="Li J.H."/>
            <person name="Li Y.-P."/>
            <person name="Lin X."/>
            <person name="Liu S.X."/>
            <person name="Liu Z.A."/>
            <person name="Luros J.S."/>
            <person name="Maiti R."/>
            <person name="Marziali A."/>
            <person name="Militscher J."/>
            <person name="Miranda M."/>
            <person name="Nguyen M."/>
            <person name="Nierman W.C."/>
            <person name="Osborne B.I."/>
            <person name="Pai G."/>
            <person name="Peterson J."/>
            <person name="Pham P.K."/>
            <person name="Rizzo M."/>
            <person name="Rooney T."/>
            <person name="Rowley D."/>
            <person name="Sakano H."/>
            <person name="Salzberg S.L."/>
            <person name="Schwartz J.R."/>
            <person name="Shinn P."/>
            <person name="Southwick A.M."/>
            <person name="Sun H."/>
            <person name="Tallon L.J."/>
            <person name="Tambunga G."/>
            <person name="Toriumi M.J."/>
            <person name="Town C.D."/>
            <person name="Utterback T."/>
            <person name="Van Aken S."/>
            <person name="Vaysberg M."/>
            <person name="Vysotskaia V.S."/>
            <person name="Walker M."/>
            <person name="Wu D."/>
            <person name="Yu G."/>
            <person name="Fraser C.M."/>
            <person name="Venter J.C."/>
            <person name="Davis R.W."/>
        </authorList>
    </citation>
    <scope>NUCLEOTIDE SEQUENCE [LARGE SCALE GENOMIC DNA]</scope>
    <source>
        <strain>cv. Columbia</strain>
    </source>
</reference>
<reference key="2">
    <citation type="journal article" date="2017" name="Plant J.">
        <title>Araport11: a complete reannotation of the Arabidopsis thaliana reference genome.</title>
        <authorList>
            <person name="Cheng C.Y."/>
            <person name="Krishnakumar V."/>
            <person name="Chan A.P."/>
            <person name="Thibaud-Nissen F."/>
            <person name="Schobel S."/>
            <person name="Town C.D."/>
        </authorList>
    </citation>
    <scope>GENOME REANNOTATION</scope>
    <source>
        <strain>cv. Columbia</strain>
    </source>
</reference>
<reference key="3">
    <citation type="journal article" date="2000" name="Plant Mol. Biol.">
        <title>Organization and structural evolution of four multigene families in Arabidopsis thaliana: AtLCAD, AtLGT, AtMYST and AtHD-GL2.</title>
        <authorList>
            <person name="Tavares R."/>
            <person name="Aubourg S."/>
            <person name="Lecharny A."/>
            <person name="Kreis M."/>
        </authorList>
    </citation>
    <scope>GENE FAMILY</scope>
</reference>
<reference key="4">
    <citation type="journal article" date="2006" name="Plant Physiol.">
        <title>Characterization of the class IV homeodomain-leucine zipper gene family in Arabidopsis.</title>
        <authorList>
            <person name="Nakamura M."/>
            <person name="Katsumata H."/>
            <person name="Abe M."/>
            <person name="Yabe N."/>
            <person name="Komeda Y."/>
            <person name="Yamamoto K.T."/>
            <person name="Takahashi T."/>
        </authorList>
    </citation>
    <scope>TISSUE SPECIFICITY</scope>
    <scope>GENE FAMILY</scope>
    <scope>NOMENCLATURE</scope>
</reference>
<reference key="5">
    <citation type="journal article" date="2015" name="Development">
        <title>AIL and HDG proteins act antagonistically to control cell proliferation.</title>
        <authorList>
            <person name="Horstman A."/>
            <person name="Fukuoka H."/>
            <person name="Muino J.M."/>
            <person name="Nitsch L."/>
            <person name="Guo C."/>
            <person name="Passarinho P."/>
            <person name="Sanchez-Perez G."/>
            <person name="Immink R."/>
            <person name="Angenent G."/>
            <person name="Boutilier K."/>
        </authorList>
    </citation>
    <scope>INTERACTION WITH ANT; BBM AND AIL1</scope>
    <source>
        <strain>cv. Columbia</strain>
    </source>
</reference>
<feature type="chain" id="PRO_0000331671" description="Homeobox-leucine zipper protein HDG10">
    <location>
        <begin position="1"/>
        <end position="708"/>
    </location>
</feature>
<feature type="domain" description="START" evidence="4">
    <location>
        <begin position="218"/>
        <end position="456"/>
    </location>
</feature>
<feature type="DNA-binding region" description="Homeobox" evidence="3">
    <location>
        <begin position="16"/>
        <end position="75"/>
    </location>
</feature>
<feature type="region of interest" description="Disordered" evidence="5">
    <location>
        <begin position="1"/>
        <end position="24"/>
    </location>
</feature>
<feature type="region of interest" description="Disordered" evidence="5">
    <location>
        <begin position="162"/>
        <end position="188"/>
    </location>
</feature>
<feature type="coiled-coil region" evidence="2">
    <location>
        <begin position="119"/>
        <end position="141"/>
    </location>
</feature>
<feature type="compositionally biased region" description="Polar residues" evidence="5">
    <location>
        <begin position="165"/>
        <end position="188"/>
    </location>
</feature>
<accession>Q9S9Z0</accession>
<accession>Q9LNM7</accession>
<keyword id="KW-0175">Coiled coil</keyword>
<keyword id="KW-0238">DNA-binding</keyword>
<keyword id="KW-0371">Homeobox</keyword>
<keyword id="KW-0539">Nucleus</keyword>
<keyword id="KW-1185">Reference proteome</keyword>
<keyword id="KW-0804">Transcription</keyword>
<keyword id="KW-0805">Transcription regulation</keyword>
<name>HDG10_ARATH</name>
<comment type="function">
    <text evidence="1">Probable transcription factor.</text>
</comment>
<comment type="subunit">
    <text evidence="7">Interacts with ANT, BBM and AIL1.</text>
</comment>
<comment type="subcellular location">
    <subcellularLocation>
        <location evidence="10">Nucleus</location>
    </subcellularLocation>
</comment>
<comment type="tissue specificity">
    <text evidence="6">Expressed in exclusively in anthers with highest levels in the tapetum and pollen grains.</text>
</comment>
<comment type="similarity">
    <text evidence="10">Belongs to the HD-ZIP homeobox family. Class IV subfamily.</text>
</comment>
<comment type="sequence caution" evidence="10">
    <conflict type="erroneous gene model prediction">
        <sequence resource="EMBL-CDS" id="AAF79277"/>
    </conflict>
</comment>
<dbReference type="EMBL" id="AC007894">
    <property type="protein sequence ID" value="AAD46012.1"/>
    <property type="molecule type" value="Genomic_DNA"/>
</dbReference>
<dbReference type="EMBL" id="AC023279">
    <property type="protein sequence ID" value="AAF79277.1"/>
    <property type="status" value="ALT_SEQ"/>
    <property type="molecule type" value="Genomic_DNA"/>
</dbReference>
<dbReference type="EMBL" id="CP002684">
    <property type="protein sequence ID" value="AEE31732.1"/>
    <property type="molecule type" value="Genomic_DNA"/>
</dbReference>
<dbReference type="PIR" id="B86470">
    <property type="entry name" value="B86470"/>
</dbReference>
<dbReference type="RefSeq" id="NP_174724.1">
    <property type="nucleotide sequence ID" value="NM_103188.3"/>
</dbReference>
<dbReference type="FunCoup" id="Q9S9Z0">
    <property type="interactions" value="7"/>
</dbReference>
<dbReference type="STRING" id="3702.Q9S9Z0"/>
<dbReference type="PaxDb" id="3702-AT1G34650.1"/>
<dbReference type="ProteomicsDB" id="247353"/>
<dbReference type="EnsemblPlants" id="AT1G34650.1">
    <property type="protein sequence ID" value="AT1G34650.1"/>
    <property type="gene ID" value="AT1G34650"/>
</dbReference>
<dbReference type="GeneID" id="840369"/>
<dbReference type="Gramene" id="AT1G34650.1">
    <property type="protein sequence ID" value="AT1G34650.1"/>
    <property type="gene ID" value="AT1G34650"/>
</dbReference>
<dbReference type="KEGG" id="ath:AT1G34650"/>
<dbReference type="Araport" id="AT1G34650"/>
<dbReference type="TAIR" id="AT1G34650">
    <property type="gene designation" value="HDG10"/>
</dbReference>
<dbReference type="eggNOG" id="ENOG502QTNV">
    <property type="taxonomic scope" value="Eukaryota"/>
</dbReference>
<dbReference type="HOGENOM" id="CLU_015002_2_1_1"/>
<dbReference type="InParanoid" id="Q9S9Z0"/>
<dbReference type="OMA" id="MTEAMVG"/>
<dbReference type="PhylomeDB" id="Q9S9Z0"/>
<dbReference type="PRO" id="PR:Q9S9Z0"/>
<dbReference type="Proteomes" id="UP000006548">
    <property type="component" value="Chromosome 1"/>
</dbReference>
<dbReference type="ExpressionAtlas" id="Q9S9Z0">
    <property type="expression patterns" value="baseline and differential"/>
</dbReference>
<dbReference type="GO" id="GO:0005634">
    <property type="term" value="C:nucleus"/>
    <property type="evidence" value="ECO:0007669"/>
    <property type="project" value="UniProtKB-SubCell"/>
</dbReference>
<dbReference type="GO" id="GO:0003677">
    <property type="term" value="F:DNA binding"/>
    <property type="evidence" value="ECO:0007669"/>
    <property type="project" value="UniProtKB-KW"/>
</dbReference>
<dbReference type="GO" id="GO:0003700">
    <property type="term" value="F:DNA-binding transcription factor activity"/>
    <property type="evidence" value="ECO:0000250"/>
    <property type="project" value="TAIR"/>
</dbReference>
<dbReference type="GO" id="GO:0008289">
    <property type="term" value="F:lipid binding"/>
    <property type="evidence" value="ECO:0007669"/>
    <property type="project" value="InterPro"/>
</dbReference>
<dbReference type="CDD" id="cd00086">
    <property type="entry name" value="homeodomain"/>
    <property type="match status" value="1"/>
</dbReference>
<dbReference type="CDD" id="cd08875">
    <property type="entry name" value="START_ArGLABRA2_like"/>
    <property type="match status" value="1"/>
</dbReference>
<dbReference type="FunFam" id="1.10.10.60:FF:000229">
    <property type="entry name" value="Homeobox-leucine zipper protein HDG1"/>
    <property type="match status" value="1"/>
</dbReference>
<dbReference type="FunFam" id="3.30.530.20:FF:000099">
    <property type="entry name" value="Homeobox-leucine zipper protein HDG8"/>
    <property type="match status" value="1"/>
</dbReference>
<dbReference type="Gene3D" id="3.30.530.20">
    <property type="match status" value="1"/>
</dbReference>
<dbReference type="Gene3D" id="1.10.10.60">
    <property type="entry name" value="Homeodomain-like"/>
    <property type="match status" value="1"/>
</dbReference>
<dbReference type="InterPro" id="IPR042160">
    <property type="entry name" value="GLABRA2/ANL2/PDF2/ATML1-like"/>
</dbReference>
<dbReference type="InterPro" id="IPR001356">
    <property type="entry name" value="HD"/>
</dbReference>
<dbReference type="InterPro" id="IPR009057">
    <property type="entry name" value="Homeodomain-like_sf"/>
</dbReference>
<dbReference type="InterPro" id="IPR023393">
    <property type="entry name" value="START-like_dom_sf"/>
</dbReference>
<dbReference type="InterPro" id="IPR002913">
    <property type="entry name" value="START_lipid-bd_dom"/>
</dbReference>
<dbReference type="PANTHER" id="PTHR45654:SF9">
    <property type="entry name" value="HOMEOBOX-LEUCINE ZIPPER PROTEIN HDG10-RELATED"/>
    <property type="match status" value="1"/>
</dbReference>
<dbReference type="PANTHER" id="PTHR45654">
    <property type="entry name" value="HOMEOBOX-LEUCINE ZIPPER PROTEIN MERISTEM L1"/>
    <property type="match status" value="1"/>
</dbReference>
<dbReference type="Pfam" id="PF00046">
    <property type="entry name" value="Homeodomain"/>
    <property type="match status" value="1"/>
</dbReference>
<dbReference type="Pfam" id="PF01852">
    <property type="entry name" value="START"/>
    <property type="match status" value="1"/>
</dbReference>
<dbReference type="SMART" id="SM00389">
    <property type="entry name" value="HOX"/>
    <property type="match status" value="1"/>
</dbReference>
<dbReference type="SMART" id="SM00234">
    <property type="entry name" value="START"/>
    <property type="match status" value="1"/>
</dbReference>
<dbReference type="SUPFAM" id="SSF55961">
    <property type="entry name" value="Bet v1-like"/>
    <property type="match status" value="2"/>
</dbReference>
<dbReference type="SUPFAM" id="SSF46689">
    <property type="entry name" value="Homeodomain-like"/>
    <property type="match status" value="1"/>
</dbReference>
<dbReference type="PROSITE" id="PS50071">
    <property type="entry name" value="HOMEOBOX_2"/>
    <property type="match status" value="1"/>
</dbReference>
<dbReference type="PROSITE" id="PS50848">
    <property type="entry name" value="START"/>
    <property type="match status" value="1"/>
</dbReference>
<sequence length="708" mass="80058">MDSSHNDSSSDEEGIDSNNRRHHSNHQVQRLEAFFHECPHPDDSQRRQLGNELNLKHKQIKFWFQNRRTQARIHNEKADNIALRVENMKIRCVNEAMEKALETVLCPPCGGPHGKEEQLCNLQKLRTKNVILKTEYERLSSYLTKHGGYSIPSVDALPDLHGPSTYGSTSNNRPASYGSSSNHLPQQSSLLRRPFTRELINTTPLPKPVLLQHFQQLSQLEKNRMFEIAKNAVAEVMSLIQMEHSMWIKSTIDGRAIIDPGNYKRYFTKNSHLKSRSALQSHHESSMEVVVVQMDARNLVDMFLNTEKWARLFPTIVTEAKTIHVLDSMDHPRQTFSRVVYEQLHILSPLVLPREFIILRTCQQMKEDLWLIADVSCYLQNVEFESTAPICTKRPSGVLIQALPHGRSKVTWIEHVEVTDKVWPHQLYRDLLYGGFGYGARRWTATLQRMCERLSLYSMTDFPPTDYPGVVKTIEGRRSVMSLGERMLKNFAWIMKMSDKLDLPQQSGANNSGVRISVRTNTEAGQPPGLIVCAGSSLSLPLPPLQVYDFLRNLEVRHQWDVHCQGNPVTEAARFVTGPDQKNNVTFLQPSSVGEYKLMILQDGFIDALGGMVVYAPMNLNTAYSAISGQVDPSTIPILPSGFIISRDSHPSSSEVDGGSMTLLTLAFQIFVTGPSYYTDLNLKDSATTVNTLVSSAVQRIKAMLNCE</sequence>
<organism>
    <name type="scientific">Arabidopsis thaliana</name>
    <name type="common">Mouse-ear cress</name>
    <dbReference type="NCBI Taxonomy" id="3702"/>
    <lineage>
        <taxon>Eukaryota</taxon>
        <taxon>Viridiplantae</taxon>
        <taxon>Streptophyta</taxon>
        <taxon>Embryophyta</taxon>
        <taxon>Tracheophyta</taxon>
        <taxon>Spermatophyta</taxon>
        <taxon>Magnoliopsida</taxon>
        <taxon>eudicotyledons</taxon>
        <taxon>Gunneridae</taxon>
        <taxon>Pentapetalae</taxon>
        <taxon>rosids</taxon>
        <taxon>malvids</taxon>
        <taxon>Brassicales</taxon>
        <taxon>Brassicaceae</taxon>
        <taxon>Camelineae</taxon>
        <taxon>Arabidopsis</taxon>
    </lineage>
</organism>
<evidence type="ECO:0000250" key="1"/>
<evidence type="ECO:0000255" key="2"/>
<evidence type="ECO:0000255" key="3">
    <source>
        <dbReference type="PROSITE-ProRule" id="PRU00108"/>
    </source>
</evidence>
<evidence type="ECO:0000255" key="4">
    <source>
        <dbReference type="PROSITE-ProRule" id="PRU00197"/>
    </source>
</evidence>
<evidence type="ECO:0000256" key="5">
    <source>
        <dbReference type="SAM" id="MobiDB-lite"/>
    </source>
</evidence>
<evidence type="ECO:0000269" key="6">
    <source>
    </source>
</evidence>
<evidence type="ECO:0000269" key="7">
    <source>
    </source>
</evidence>
<evidence type="ECO:0000303" key="8">
    <source>
    </source>
</evidence>
<evidence type="ECO:0000303" key="9">
    <source>
    </source>
</evidence>
<evidence type="ECO:0000305" key="10"/>
<evidence type="ECO:0000312" key="11">
    <source>
        <dbReference type="Araport" id="AT1G34650"/>
    </source>
</evidence>
<evidence type="ECO:0000312" key="12">
    <source>
        <dbReference type="EMBL" id="AAD46012.1"/>
    </source>
</evidence>
<evidence type="ECO:0000312" key="13">
    <source>
        <dbReference type="EMBL" id="AAF79277.1"/>
    </source>
</evidence>
<protein>
    <recommendedName>
        <fullName evidence="9">Homeobox-leucine zipper protein HDG10</fullName>
    </recommendedName>
    <alternativeName>
        <fullName evidence="9">HD-ZIP protein HDG10</fullName>
    </alternativeName>
    <alternativeName>
        <fullName evidence="8">Homeodomain GLABRA 2-like protein 10</fullName>
    </alternativeName>
    <alternativeName>
        <fullName evidence="9">Homeodomain transcription factor HDG10</fullName>
    </alternativeName>
    <alternativeName>
        <fullName evidence="9">Protein HOMEODOMAIN GLABROUS 10</fullName>
    </alternativeName>
</protein>
<gene>
    <name evidence="9" type="primary">HDG10</name>
    <name evidence="8" type="synonym">HDGL2-10</name>
    <name evidence="11" type="ordered locus">At1g34650</name>
    <name evidence="13" type="ORF">F12K21.1</name>
    <name evidence="12" type="ORF">F21H2.11</name>
</gene>